<accession>Q51801</accession>
<dbReference type="EC" id="1.2.7.7"/>
<dbReference type="EMBL" id="X85250">
    <property type="protein sequence ID" value="CAA59502.1"/>
    <property type="molecule type" value="Genomic_DNA"/>
</dbReference>
<dbReference type="EMBL" id="AE009950">
    <property type="protein sequence ID" value="AAL81093.1"/>
    <property type="molecule type" value="Genomic_DNA"/>
</dbReference>
<dbReference type="PIR" id="T45085">
    <property type="entry name" value="T45085"/>
</dbReference>
<dbReference type="RefSeq" id="WP_011012106.1">
    <property type="nucleotide sequence ID" value="NZ_CP023154.1"/>
</dbReference>
<dbReference type="SMR" id="Q51801"/>
<dbReference type="IntAct" id="Q51801">
    <property type="interactions" value="1"/>
</dbReference>
<dbReference type="STRING" id="186497.PF0969"/>
<dbReference type="PaxDb" id="186497-PF0969"/>
<dbReference type="KEGG" id="pfu:PF0969"/>
<dbReference type="PATRIC" id="fig|186497.12.peg.1028"/>
<dbReference type="eggNOG" id="arCOG01608">
    <property type="taxonomic scope" value="Archaea"/>
</dbReference>
<dbReference type="HOGENOM" id="CLU_002569_5_0_2"/>
<dbReference type="OrthoDB" id="372068at2157"/>
<dbReference type="PhylomeDB" id="Q51801"/>
<dbReference type="Proteomes" id="UP000001013">
    <property type="component" value="Chromosome"/>
</dbReference>
<dbReference type="GO" id="GO:0043807">
    <property type="term" value="F:3-methyl-2-oxobutanoate dehydrogenase (ferredoxin) activity"/>
    <property type="evidence" value="ECO:0007669"/>
    <property type="project" value="UniProtKB-EC"/>
</dbReference>
<dbReference type="GO" id="GO:0006082">
    <property type="term" value="P:organic acid metabolic process"/>
    <property type="evidence" value="ECO:0007669"/>
    <property type="project" value="UniProtKB-ARBA"/>
</dbReference>
<dbReference type="GO" id="GO:0006979">
    <property type="term" value="P:response to oxidative stress"/>
    <property type="evidence" value="ECO:0007669"/>
    <property type="project" value="TreeGrafter"/>
</dbReference>
<dbReference type="GO" id="GO:0044272">
    <property type="term" value="P:sulfur compound biosynthetic process"/>
    <property type="evidence" value="ECO:0007669"/>
    <property type="project" value="UniProtKB-ARBA"/>
</dbReference>
<dbReference type="CDD" id="cd07034">
    <property type="entry name" value="TPP_PYR_PFOR_IOR-alpha_like"/>
    <property type="match status" value="1"/>
</dbReference>
<dbReference type="FunFam" id="3.40.50.920:FF:000010">
    <property type="entry name" value="Pyruvate ferredoxin oxidoreductase, alpha subunit"/>
    <property type="match status" value="1"/>
</dbReference>
<dbReference type="FunFam" id="3.40.50.970:FF:000012">
    <property type="entry name" value="Pyruvate:ferredoxin (Flavodoxin) oxidoreductase"/>
    <property type="match status" value="1"/>
</dbReference>
<dbReference type="Gene3D" id="3.40.50.920">
    <property type="match status" value="1"/>
</dbReference>
<dbReference type="Gene3D" id="3.40.50.970">
    <property type="match status" value="1"/>
</dbReference>
<dbReference type="InterPro" id="IPR033412">
    <property type="entry name" value="PFOR_II"/>
</dbReference>
<dbReference type="InterPro" id="IPR050722">
    <property type="entry name" value="Pyruvate:ferred/Flavod_OxRd"/>
</dbReference>
<dbReference type="InterPro" id="IPR002880">
    <property type="entry name" value="Pyrv_Fd/Flavodoxin_OxRdtase_N"/>
</dbReference>
<dbReference type="InterPro" id="IPR029061">
    <property type="entry name" value="THDP-binding"/>
</dbReference>
<dbReference type="InterPro" id="IPR009014">
    <property type="entry name" value="Transketo_C/PFOR_II"/>
</dbReference>
<dbReference type="NCBIfam" id="NF006232">
    <property type="entry name" value="PRK08366.1"/>
    <property type="match status" value="1"/>
</dbReference>
<dbReference type="PANTHER" id="PTHR32154">
    <property type="entry name" value="PYRUVATE-FLAVODOXIN OXIDOREDUCTASE-RELATED"/>
    <property type="match status" value="1"/>
</dbReference>
<dbReference type="PANTHER" id="PTHR32154:SF0">
    <property type="entry name" value="PYRUVATE-FLAVODOXIN OXIDOREDUCTASE-RELATED"/>
    <property type="match status" value="1"/>
</dbReference>
<dbReference type="Pfam" id="PF17147">
    <property type="entry name" value="PFOR_II"/>
    <property type="match status" value="1"/>
</dbReference>
<dbReference type="Pfam" id="PF01855">
    <property type="entry name" value="POR_N"/>
    <property type="match status" value="1"/>
</dbReference>
<dbReference type="SUPFAM" id="SSF52518">
    <property type="entry name" value="Thiamin diphosphate-binding fold (THDP-binding)"/>
    <property type="match status" value="1"/>
</dbReference>
<dbReference type="SUPFAM" id="SSF52922">
    <property type="entry name" value="TK C-terminal domain-like"/>
    <property type="match status" value="1"/>
</dbReference>
<name>VORA_PYRFU</name>
<protein>
    <recommendedName>
        <fullName>Ketoisovalerate oxidoreductase subunit VorA</fullName>
        <shortName>VOR</shortName>
        <ecNumber>1.2.7.7</ecNumber>
    </recommendedName>
    <alternativeName>
        <fullName>2-oxoisovalerate ferredoxin reductase subunit alpha</fullName>
    </alternativeName>
    <alternativeName>
        <fullName>2-oxoisovalerate oxidoreductase alpha chain</fullName>
    </alternativeName>
</protein>
<keyword id="KW-0903">Direct protein sequencing</keyword>
<keyword id="KW-0560">Oxidoreductase</keyword>
<keyword id="KW-1185">Reference proteome</keyword>
<gene>
    <name type="primary">vorA</name>
    <name type="ordered locus">PF0969</name>
</gene>
<proteinExistence type="evidence at protein level"/>
<comment type="catalytic activity">
    <reaction>
        <text>3-methyl-2-oxobutanoate + 2 oxidized [2Fe-2S]-[ferredoxin] + CoA = 2-methylpropanoyl-CoA + 2 reduced [2Fe-2S]-[ferredoxin] + CO2 + H(+)</text>
        <dbReference type="Rhea" id="RHEA:11712"/>
        <dbReference type="Rhea" id="RHEA-COMP:10000"/>
        <dbReference type="Rhea" id="RHEA-COMP:10001"/>
        <dbReference type="ChEBI" id="CHEBI:11851"/>
        <dbReference type="ChEBI" id="CHEBI:15378"/>
        <dbReference type="ChEBI" id="CHEBI:16526"/>
        <dbReference type="ChEBI" id="CHEBI:33737"/>
        <dbReference type="ChEBI" id="CHEBI:33738"/>
        <dbReference type="ChEBI" id="CHEBI:57287"/>
        <dbReference type="ChEBI" id="CHEBI:57338"/>
        <dbReference type="EC" id="1.2.7.7"/>
    </reaction>
</comment>
<comment type="subunit">
    <text>Heterotetramer of one alpha, one beta, one delta and one gamma chain.</text>
</comment>
<reference key="1">
    <citation type="journal article" date="1996" name="J. Bacteriol.">
        <title>Molecular and phylogenetic characterization of pyruvate and 2-ketoisovalerate ferredoxin oxidoreductases from Pyrococcus furiosus and pyruvate ferredoxin oxidoreductase from Thermotoga maritima.</title>
        <authorList>
            <person name="Kletzin A."/>
            <person name="Adams M.W.W."/>
        </authorList>
    </citation>
    <scope>NUCLEOTIDE SEQUENCE [GENOMIC DNA]</scope>
    <scope>PROTEIN SEQUENCE OF 1-22</scope>
    <source>
        <strain>ATCC 43587 / DSM 3638 / JCM 8422 / Vc1</strain>
    </source>
</reference>
<reference key="2">
    <citation type="journal article" date="1999" name="Genetics">
        <title>Divergence of the hyperthermophilic archaea Pyrococcus furiosus and P. horikoshii inferred from complete genomic sequences.</title>
        <authorList>
            <person name="Maeder D.L."/>
            <person name="Weiss R.B."/>
            <person name="Dunn D.M."/>
            <person name="Cherry J.L."/>
            <person name="Gonzalez J.M."/>
            <person name="DiRuggiero J."/>
            <person name="Robb F.T."/>
        </authorList>
    </citation>
    <scope>NUCLEOTIDE SEQUENCE [LARGE SCALE GENOMIC DNA]</scope>
    <source>
        <strain>ATCC 43587 / DSM 3638 / JCM 8422 / Vc1</strain>
    </source>
</reference>
<sequence>MEYKPIRKVVSGNYAAAYAALHARVQVVAAYPITPQTSIIEKIAEFIANGEADIQYIPVESEHSAMAACIGASATGARTFTATSAQGLALMHEMLHWAAGARLPIVMVDVNRAMAPPWSVWDDQTDSLSQRDTGWMQFYAENNQEVYDGVLMAYKVAETVNVPAMVVESAFILSHTYDVVEMIPQELVDEFLPPRKPLYSLANFDEPIAVGALATPNDYYEFRYKLAKAHEEAKKVIKEVGKEFGERFGRDYSQMIETGYIDDADFVFMGMGSLMGTVKEAVDLLRKEGYKVGYAKVRWFRPFPKEELVEIAESVKGIAVLDRNFSFGQEGILFTESKGALYNSSAHPLMKNYIVGLGGRDVTVKDIKAIADDMKKVIESGKVDKEVVWYHLKR</sequence>
<organism>
    <name type="scientific">Pyrococcus furiosus (strain ATCC 43587 / DSM 3638 / JCM 8422 / Vc1)</name>
    <dbReference type="NCBI Taxonomy" id="186497"/>
    <lineage>
        <taxon>Archaea</taxon>
        <taxon>Methanobacteriati</taxon>
        <taxon>Methanobacteriota</taxon>
        <taxon>Thermococci</taxon>
        <taxon>Thermococcales</taxon>
        <taxon>Thermococcaceae</taxon>
        <taxon>Pyrococcus</taxon>
    </lineage>
</organism>
<feature type="chain" id="PRO_0000099952" description="Ketoisovalerate oxidoreductase subunit VorA">
    <location>
        <begin position="1"/>
        <end position="394"/>
    </location>
</feature>